<protein>
    <recommendedName>
        <fullName>Choline monooxygenase, chloroplastic</fullName>
        <ecNumber>1.14.15.7</ecNumber>
    </recommendedName>
</protein>
<sequence>MMAASASATTMLLKYPTTVCGIPNPSSNNNNDPSNNIVSIPQNTTNPTLKSRTPNKITTNAVAAPSFPSLTTTTPSSIQSLVHEFDPQIPPEDAHTPPSSWYTEPAFYSHELERIFYKGWQVAGISDQIKEPNQYFTGSLGNVEYLVSRDGEGKVHAFHNVCTHRASILACGSGKKSCFVCPYHGWVYGMDGSLAKASKAKPEQNLDPKELGLVPLKVAVWGPFVLISLDRSLEEGGDVGTEWLGTSAEDVKAHAFDPSLQFIHRSEFPMESNWKIFSDNYLDSSYHVPYAHKYYATELNFDTYDTQMIENVTIQRVEGSSNKPDGFDRVGIQAFYAFAYPNFAVERYGPWMTTMHIHPLGPRKCKLVVDYYIENSMLDDKDYIEKGIAINDNVQREDVVLCESVQRGLETPAYRSGRYVMPIEKGIHHFHCWLQQTLK</sequence>
<comment type="function">
    <text>Catalyzes the first step of the osmoprotectant glycine betaine synthesis.</text>
</comment>
<comment type="catalytic activity">
    <reaction>
        <text>choline + 2 reduced [2Fe-2S]-[ferredoxin] + O2 + 2 H(+) = betaine aldehyde hydrate + 2 oxidized [2Fe-2S]-[ferredoxin] + H2O</text>
        <dbReference type="Rhea" id="RHEA:17769"/>
        <dbReference type="Rhea" id="RHEA-COMP:10000"/>
        <dbReference type="Rhea" id="RHEA-COMP:10001"/>
        <dbReference type="ChEBI" id="CHEBI:15354"/>
        <dbReference type="ChEBI" id="CHEBI:15377"/>
        <dbReference type="ChEBI" id="CHEBI:15378"/>
        <dbReference type="ChEBI" id="CHEBI:15379"/>
        <dbReference type="ChEBI" id="CHEBI:15870"/>
        <dbReference type="ChEBI" id="CHEBI:33737"/>
        <dbReference type="ChEBI" id="CHEBI:33738"/>
        <dbReference type="EC" id="1.14.15.7"/>
    </reaction>
</comment>
<comment type="cofactor">
    <cofactor>
        <name>[2Fe-2S] cluster</name>
        <dbReference type="ChEBI" id="CHEBI:190135"/>
    </cofactor>
    <text>Binds 1 [2Fe-2S] cluster.</text>
</comment>
<comment type="cofactor">
    <cofactor evidence="6">
        <name>Fe cation</name>
        <dbReference type="ChEBI" id="CHEBI:24875"/>
    </cofactor>
    <text evidence="6">Binds 1 Fe cation.</text>
</comment>
<comment type="cofactor">
    <cofactor evidence="1">
        <name>Mg(2+)</name>
        <dbReference type="ChEBI" id="CHEBI:18420"/>
    </cofactor>
</comment>
<comment type="pathway">
    <text>Amine and polyamine biosynthesis; betaine biosynthesis via choline pathway; betaine aldehyde from choline (monooxygenase route): step 1/1.</text>
</comment>
<comment type="subunit">
    <text evidence="6">Homotrimer or homodimer.</text>
</comment>
<comment type="subcellular location">
    <subcellularLocation>
        <location>Plastid</location>
        <location>Chloroplast stroma</location>
    </subcellularLocation>
</comment>
<comment type="tissue specificity">
    <text>Expressed in leaves.</text>
</comment>
<comment type="induction">
    <text>By salt stress.</text>
</comment>
<comment type="mass spectrometry"/>
<comment type="similarity">
    <text evidence="6">Belongs to the choline monooxygenase family.</text>
</comment>
<name>CHMO_SPIOL</name>
<reference key="1">
    <citation type="journal article" date="1997" name="Proc. Natl. Acad. Sci. U.S.A.">
        <title>Choline monooxygenase, an unusual iron-sulfur enzyme catalyzing the first step of glycine betaine synthesis in plants: prosthetic group characterization and cDNA cloning.</title>
        <authorList>
            <person name="Rathinasabapathi B."/>
            <person name="Burnet M."/>
            <person name="Russell B.L."/>
            <person name="Gage D.A."/>
            <person name="Liao P.-C."/>
            <person name="Nye G.J."/>
            <person name="Scott P."/>
            <person name="Golbeck J.H."/>
            <person name="Hanson A.D."/>
        </authorList>
    </citation>
    <scope>NUCLEOTIDE SEQUENCE [MRNA]</scope>
    <scope>PROTEIN SEQUENCE OF 61-84; 200-225; 253-288; 317-361; 367-379; 408-415 AND 419-438</scope>
    <scope>MASS SPECTROMETRY</scope>
    <source>
        <strain>cv. Savoy hybrid 612</strain>
        <tissue>Leaf</tissue>
    </source>
</reference>
<accession>O04121</accession>
<keyword id="KW-0001">2Fe-2S</keyword>
<keyword id="KW-0150">Chloroplast</keyword>
<keyword id="KW-0903">Direct protein sequencing</keyword>
<keyword id="KW-0408">Iron</keyword>
<keyword id="KW-0411">Iron-sulfur</keyword>
<keyword id="KW-0460">Magnesium</keyword>
<keyword id="KW-0479">Metal-binding</keyword>
<keyword id="KW-0503">Monooxygenase</keyword>
<keyword id="KW-0560">Oxidoreductase</keyword>
<keyword id="KW-0934">Plastid</keyword>
<keyword id="KW-1185">Reference proteome</keyword>
<keyword id="KW-0346">Stress response</keyword>
<keyword id="KW-0809">Transit peptide</keyword>
<feature type="transit peptide" description="Chloroplast" evidence="5">
    <location>
        <begin position="1"/>
        <end position="60"/>
    </location>
</feature>
<feature type="chain" id="PRO_0000020928" description="Choline monooxygenase, chloroplastic">
    <location>
        <begin position="61"/>
        <end position="439"/>
    </location>
</feature>
<feature type="domain" description="Rieske" evidence="3">
    <location>
        <begin position="120"/>
        <end position="227"/>
    </location>
</feature>
<feature type="region of interest" description="Disordered" evidence="4">
    <location>
        <begin position="24"/>
        <end position="54"/>
    </location>
</feature>
<feature type="compositionally biased region" description="Low complexity" evidence="4">
    <location>
        <begin position="24"/>
        <end position="41"/>
    </location>
</feature>
<feature type="compositionally biased region" description="Polar residues" evidence="4">
    <location>
        <begin position="42"/>
        <end position="54"/>
    </location>
</feature>
<feature type="binding site" evidence="6">
    <location>
        <position position="162"/>
    </location>
    <ligand>
        <name>[2Fe-2S] cluster</name>
        <dbReference type="ChEBI" id="CHEBI:190135"/>
    </ligand>
</feature>
<feature type="binding site" evidence="6">
    <location>
        <position position="164"/>
    </location>
    <ligand>
        <name>[2Fe-2S] cluster</name>
        <dbReference type="ChEBI" id="CHEBI:190135"/>
    </ligand>
</feature>
<feature type="binding site" evidence="6">
    <location>
        <position position="181"/>
    </location>
    <ligand>
        <name>[2Fe-2S] cluster</name>
        <dbReference type="ChEBI" id="CHEBI:190135"/>
    </ligand>
</feature>
<feature type="binding site" evidence="6">
    <location>
        <position position="184"/>
    </location>
    <ligand>
        <name>[2Fe-2S] cluster</name>
        <dbReference type="ChEBI" id="CHEBI:190135"/>
    </ligand>
</feature>
<feature type="binding site" evidence="2">
    <location>
        <position position="287"/>
    </location>
    <ligand>
        <name>Fe cation</name>
        <dbReference type="ChEBI" id="CHEBI:24875"/>
    </ligand>
</feature>
<feature type="binding site" evidence="2">
    <location>
        <position position="292"/>
    </location>
    <ligand>
        <name>Fe cation</name>
        <dbReference type="ChEBI" id="CHEBI:24875"/>
    </ligand>
</feature>
<gene>
    <name type="primary">CMO</name>
</gene>
<evidence type="ECO:0000250" key="1"/>
<evidence type="ECO:0000255" key="2"/>
<evidence type="ECO:0000255" key="3">
    <source>
        <dbReference type="PROSITE-ProRule" id="PRU00628"/>
    </source>
</evidence>
<evidence type="ECO:0000256" key="4">
    <source>
        <dbReference type="SAM" id="MobiDB-lite"/>
    </source>
</evidence>
<evidence type="ECO:0000269" key="5">
    <source>
    </source>
</evidence>
<evidence type="ECO:0000305" key="6"/>
<organism>
    <name type="scientific">Spinacia oleracea</name>
    <name type="common">Spinach</name>
    <dbReference type="NCBI Taxonomy" id="3562"/>
    <lineage>
        <taxon>Eukaryota</taxon>
        <taxon>Viridiplantae</taxon>
        <taxon>Streptophyta</taxon>
        <taxon>Embryophyta</taxon>
        <taxon>Tracheophyta</taxon>
        <taxon>Spermatophyta</taxon>
        <taxon>Magnoliopsida</taxon>
        <taxon>eudicotyledons</taxon>
        <taxon>Gunneridae</taxon>
        <taxon>Pentapetalae</taxon>
        <taxon>Caryophyllales</taxon>
        <taxon>Chenopodiaceae</taxon>
        <taxon>Chenopodioideae</taxon>
        <taxon>Anserineae</taxon>
        <taxon>Spinacia</taxon>
    </lineage>
</organism>
<dbReference type="EC" id="1.14.15.7"/>
<dbReference type="EMBL" id="U85780">
    <property type="protein sequence ID" value="AAB52509.1"/>
    <property type="molecule type" value="mRNA"/>
</dbReference>
<dbReference type="PIR" id="T09214">
    <property type="entry name" value="T09214"/>
</dbReference>
<dbReference type="SMR" id="O04121"/>
<dbReference type="KEGG" id="ag:AAB52509"/>
<dbReference type="OrthoDB" id="426882at2759"/>
<dbReference type="BioCyc" id="MetaCyc:MONOMER-3203"/>
<dbReference type="BRENDA" id="1.14.15.7">
    <property type="organism ID" value="5812"/>
</dbReference>
<dbReference type="UniPathway" id="UPA00529">
    <property type="reaction ID" value="UER00430"/>
</dbReference>
<dbReference type="Proteomes" id="UP001155700">
    <property type="component" value="Unplaced"/>
</dbReference>
<dbReference type="GO" id="GO:0009570">
    <property type="term" value="C:chloroplast stroma"/>
    <property type="evidence" value="ECO:0007669"/>
    <property type="project" value="UniProtKB-SubCell"/>
</dbReference>
<dbReference type="GO" id="GO:0051537">
    <property type="term" value="F:2 iron, 2 sulfur cluster binding"/>
    <property type="evidence" value="ECO:0007669"/>
    <property type="project" value="UniProtKB-KW"/>
</dbReference>
<dbReference type="GO" id="GO:0019133">
    <property type="term" value="F:choline monooxygenase activity"/>
    <property type="evidence" value="ECO:0007669"/>
    <property type="project" value="UniProtKB-EC"/>
</dbReference>
<dbReference type="GO" id="GO:0005506">
    <property type="term" value="F:iron ion binding"/>
    <property type="evidence" value="ECO:0007669"/>
    <property type="project" value="InterPro"/>
</dbReference>
<dbReference type="GO" id="GO:0019285">
    <property type="term" value="P:glycine betaine biosynthetic process from choline"/>
    <property type="evidence" value="ECO:0007669"/>
    <property type="project" value="UniProtKB-UniPathway"/>
</dbReference>
<dbReference type="CDD" id="cd08883">
    <property type="entry name" value="RHO_alpha_C_CMO-like"/>
    <property type="match status" value="1"/>
</dbReference>
<dbReference type="CDD" id="cd03541">
    <property type="entry name" value="Rieske_RO_Alpha_CMO"/>
    <property type="match status" value="1"/>
</dbReference>
<dbReference type="Gene3D" id="3.90.380.10">
    <property type="entry name" value="Naphthalene 1,2-dioxygenase Alpha Subunit, Chain A, domain 1"/>
    <property type="match status" value="2"/>
</dbReference>
<dbReference type="Gene3D" id="2.102.10.10">
    <property type="entry name" value="Rieske [2Fe-2S] iron-sulphur domain"/>
    <property type="match status" value="1"/>
</dbReference>
<dbReference type="InterPro" id="IPR017941">
    <property type="entry name" value="Rieske_2Fe-2S"/>
</dbReference>
<dbReference type="InterPro" id="IPR036922">
    <property type="entry name" value="Rieske_2Fe-2S_sf"/>
</dbReference>
<dbReference type="InterPro" id="IPR015879">
    <property type="entry name" value="Ring_hydroxy_dOase_asu_C_dom"/>
</dbReference>
<dbReference type="InterPro" id="IPR001663">
    <property type="entry name" value="Rng_hydr_dOase-A"/>
</dbReference>
<dbReference type="PANTHER" id="PTHR43756">
    <property type="entry name" value="CHOLINE MONOOXYGENASE, CHLOROPLASTIC"/>
    <property type="match status" value="1"/>
</dbReference>
<dbReference type="PANTHER" id="PTHR43756:SF5">
    <property type="entry name" value="CHOLINE MONOOXYGENASE, CHLOROPLASTIC"/>
    <property type="match status" value="1"/>
</dbReference>
<dbReference type="Pfam" id="PF00355">
    <property type="entry name" value="Rieske"/>
    <property type="match status" value="1"/>
</dbReference>
<dbReference type="Pfam" id="PF00848">
    <property type="entry name" value="Ring_hydroxyl_A"/>
    <property type="match status" value="1"/>
</dbReference>
<dbReference type="PRINTS" id="PR00090">
    <property type="entry name" value="RNGDIOXGNASE"/>
</dbReference>
<dbReference type="SUPFAM" id="SSF55961">
    <property type="entry name" value="Bet v1-like"/>
    <property type="match status" value="1"/>
</dbReference>
<dbReference type="SUPFAM" id="SSF50022">
    <property type="entry name" value="ISP domain"/>
    <property type="match status" value="1"/>
</dbReference>
<dbReference type="PROSITE" id="PS51296">
    <property type="entry name" value="RIESKE"/>
    <property type="match status" value="1"/>
</dbReference>
<proteinExistence type="evidence at protein level"/>